<name>AROC_ANASK</name>
<feature type="chain" id="PRO_1000115326" description="Chorismate synthase">
    <location>
        <begin position="1"/>
        <end position="381"/>
    </location>
</feature>
<feature type="binding site" evidence="1">
    <location>
        <position position="41"/>
    </location>
    <ligand>
        <name>NADP(+)</name>
        <dbReference type="ChEBI" id="CHEBI:58349"/>
    </ligand>
</feature>
<feature type="binding site" evidence="1">
    <location>
        <position position="47"/>
    </location>
    <ligand>
        <name>NADP(+)</name>
        <dbReference type="ChEBI" id="CHEBI:58349"/>
    </ligand>
</feature>
<feature type="binding site" evidence="1">
    <location>
        <begin position="127"/>
        <end position="129"/>
    </location>
    <ligand>
        <name>FMN</name>
        <dbReference type="ChEBI" id="CHEBI:58210"/>
    </ligand>
</feature>
<feature type="binding site" evidence="1">
    <location>
        <begin position="247"/>
        <end position="248"/>
    </location>
    <ligand>
        <name>FMN</name>
        <dbReference type="ChEBI" id="CHEBI:58210"/>
    </ligand>
</feature>
<feature type="binding site" evidence="1">
    <location>
        <position position="291"/>
    </location>
    <ligand>
        <name>FMN</name>
        <dbReference type="ChEBI" id="CHEBI:58210"/>
    </ligand>
</feature>
<feature type="binding site" evidence="1">
    <location>
        <begin position="306"/>
        <end position="310"/>
    </location>
    <ligand>
        <name>FMN</name>
        <dbReference type="ChEBI" id="CHEBI:58210"/>
    </ligand>
</feature>
<feature type="binding site" evidence="1">
    <location>
        <position position="332"/>
    </location>
    <ligand>
        <name>FMN</name>
        <dbReference type="ChEBI" id="CHEBI:58210"/>
    </ligand>
</feature>
<keyword id="KW-0028">Amino-acid biosynthesis</keyword>
<keyword id="KW-0057">Aromatic amino acid biosynthesis</keyword>
<keyword id="KW-0274">FAD</keyword>
<keyword id="KW-0285">Flavoprotein</keyword>
<keyword id="KW-0288">FMN</keyword>
<keyword id="KW-0456">Lyase</keyword>
<keyword id="KW-0521">NADP</keyword>
<accession>B4ULJ3</accession>
<sequence>MTLRYLTAGESHGPALVAIAEGFPAGLAVDFEAVDRDLRRRQKGYGRGGRMKIETDAAQFLAGLRGGLTTGAPIALAVWNKDHENWKDLVSPYARGGRKFTQVRPGHADLAGALKYGLDDARDVLERASARSTAVTVALGALAKALLSTLGVEVCSRVVAIGPREIRPDAPPTPAQRDAIEASDLHVDDEALAAEWRALIDAEKARGGSIGGAFDVYATGLPIGVGSHVHPDRRLDARLAGALCGVQAIRAVEIGDGTQVGRPGYEFHDAIHHDPARGFWRETNRAGGLEGGMTDGMPLRVRAYMKPIPTMLHPLATVDLATRAATQARYERSDVCAVPAAAVVGEAVVAWELANALLEKFGGDAVEDVRRAVEAYAARIR</sequence>
<reference key="1">
    <citation type="submission" date="2008-08" db="EMBL/GenBank/DDBJ databases">
        <title>Complete sequence of Anaeromyxobacter sp. K.</title>
        <authorList>
            <consortium name="US DOE Joint Genome Institute"/>
            <person name="Lucas S."/>
            <person name="Copeland A."/>
            <person name="Lapidus A."/>
            <person name="Glavina del Rio T."/>
            <person name="Dalin E."/>
            <person name="Tice H."/>
            <person name="Bruce D."/>
            <person name="Goodwin L."/>
            <person name="Pitluck S."/>
            <person name="Saunders E."/>
            <person name="Brettin T."/>
            <person name="Detter J.C."/>
            <person name="Han C."/>
            <person name="Larimer F."/>
            <person name="Land M."/>
            <person name="Hauser L."/>
            <person name="Kyrpides N."/>
            <person name="Ovchinnikiva G."/>
            <person name="Beliaev A."/>
        </authorList>
    </citation>
    <scope>NUCLEOTIDE SEQUENCE [LARGE SCALE GENOMIC DNA]</scope>
    <source>
        <strain>K</strain>
    </source>
</reference>
<evidence type="ECO:0000255" key="1">
    <source>
        <dbReference type="HAMAP-Rule" id="MF_00300"/>
    </source>
</evidence>
<proteinExistence type="inferred from homology"/>
<protein>
    <recommendedName>
        <fullName evidence="1">Chorismate synthase</fullName>
        <shortName evidence="1">CS</shortName>
        <ecNumber evidence="1">4.2.3.5</ecNumber>
    </recommendedName>
    <alternativeName>
        <fullName evidence="1">5-enolpyruvylshikimate-3-phosphate phospholyase</fullName>
    </alternativeName>
</protein>
<organism>
    <name type="scientific">Anaeromyxobacter sp. (strain K)</name>
    <dbReference type="NCBI Taxonomy" id="447217"/>
    <lineage>
        <taxon>Bacteria</taxon>
        <taxon>Pseudomonadati</taxon>
        <taxon>Myxococcota</taxon>
        <taxon>Myxococcia</taxon>
        <taxon>Myxococcales</taxon>
        <taxon>Cystobacterineae</taxon>
        <taxon>Anaeromyxobacteraceae</taxon>
        <taxon>Anaeromyxobacter</taxon>
    </lineage>
</organism>
<gene>
    <name evidence="1" type="primary">aroC</name>
    <name type="ordered locus">AnaeK_0197</name>
</gene>
<dbReference type="EC" id="4.2.3.5" evidence="1"/>
<dbReference type="EMBL" id="CP001131">
    <property type="protein sequence ID" value="ACG71440.1"/>
    <property type="molecule type" value="Genomic_DNA"/>
</dbReference>
<dbReference type="RefSeq" id="WP_012524276.1">
    <property type="nucleotide sequence ID" value="NC_011145.1"/>
</dbReference>
<dbReference type="SMR" id="B4ULJ3"/>
<dbReference type="KEGG" id="ank:AnaeK_0197"/>
<dbReference type="HOGENOM" id="CLU_034547_2_0_7"/>
<dbReference type="OrthoDB" id="9771806at2"/>
<dbReference type="UniPathway" id="UPA00053">
    <property type="reaction ID" value="UER00090"/>
</dbReference>
<dbReference type="Proteomes" id="UP000001871">
    <property type="component" value="Chromosome"/>
</dbReference>
<dbReference type="GO" id="GO:0005829">
    <property type="term" value="C:cytosol"/>
    <property type="evidence" value="ECO:0007669"/>
    <property type="project" value="TreeGrafter"/>
</dbReference>
<dbReference type="GO" id="GO:0004107">
    <property type="term" value="F:chorismate synthase activity"/>
    <property type="evidence" value="ECO:0007669"/>
    <property type="project" value="UniProtKB-UniRule"/>
</dbReference>
<dbReference type="GO" id="GO:0010181">
    <property type="term" value="F:FMN binding"/>
    <property type="evidence" value="ECO:0007669"/>
    <property type="project" value="TreeGrafter"/>
</dbReference>
<dbReference type="GO" id="GO:0008652">
    <property type="term" value="P:amino acid biosynthetic process"/>
    <property type="evidence" value="ECO:0007669"/>
    <property type="project" value="UniProtKB-KW"/>
</dbReference>
<dbReference type="GO" id="GO:0009073">
    <property type="term" value="P:aromatic amino acid family biosynthetic process"/>
    <property type="evidence" value="ECO:0007669"/>
    <property type="project" value="UniProtKB-KW"/>
</dbReference>
<dbReference type="GO" id="GO:0009423">
    <property type="term" value="P:chorismate biosynthetic process"/>
    <property type="evidence" value="ECO:0007669"/>
    <property type="project" value="UniProtKB-UniRule"/>
</dbReference>
<dbReference type="CDD" id="cd07304">
    <property type="entry name" value="Chorismate_synthase"/>
    <property type="match status" value="1"/>
</dbReference>
<dbReference type="FunFam" id="3.60.150.10:FF:000002">
    <property type="entry name" value="Chorismate synthase"/>
    <property type="match status" value="1"/>
</dbReference>
<dbReference type="Gene3D" id="3.60.150.10">
    <property type="entry name" value="Chorismate synthase AroC"/>
    <property type="match status" value="1"/>
</dbReference>
<dbReference type="HAMAP" id="MF_00300">
    <property type="entry name" value="Chorismate_synth"/>
    <property type="match status" value="1"/>
</dbReference>
<dbReference type="InterPro" id="IPR000453">
    <property type="entry name" value="Chorismate_synth"/>
</dbReference>
<dbReference type="InterPro" id="IPR035904">
    <property type="entry name" value="Chorismate_synth_AroC_sf"/>
</dbReference>
<dbReference type="InterPro" id="IPR020541">
    <property type="entry name" value="Chorismate_synthase_CS"/>
</dbReference>
<dbReference type="NCBIfam" id="TIGR00033">
    <property type="entry name" value="aroC"/>
    <property type="match status" value="1"/>
</dbReference>
<dbReference type="NCBIfam" id="NF003793">
    <property type="entry name" value="PRK05382.1"/>
    <property type="match status" value="1"/>
</dbReference>
<dbReference type="PANTHER" id="PTHR21085">
    <property type="entry name" value="CHORISMATE SYNTHASE"/>
    <property type="match status" value="1"/>
</dbReference>
<dbReference type="PANTHER" id="PTHR21085:SF0">
    <property type="entry name" value="CHORISMATE SYNTHASE"/>
    <property type="match status" value="1"/>
</dbReference>
<dbReference type="Pfam" id="PF01264">
    <property type="entry name" value="Chorismate_synt"/>
    <property type="match status" value="1"/>
</dbReference>
<dbReference type="PIRSF" id="PIRSF001456">
    <property type="entry name" value="Chorismate_synth"/>
    <property type="match status" value="1"/>
</dbReference>
<dbReference type="SUPFAM" id="SSF103263">
    <property type="entry name" value="Chorismate synthase, AroC"/>
    <property type="match status" value="1"/>
</dbReference>
<dbReference type="PROSITE" id="PS00788">
    <property type="entry name" value="CHORISMATE_SYNTHASE_2"/>
    <property type="match status" value="1"/>
</dbReference>
<dbReference type="PROSITE" id="PS00789">
    <property type="entry name" value="CHORISMATE_SYNTHASE_3"/>
    <property type="match status" value="1"/>
</dbReference>
<comment type="function">
    <text evidence="1">Catalyzes the anti-1,4-elimination of the C-3 phosphate and the C-6 proR hydrogen from 5-enolpyruvylshikimate-3-phosphate (EPSP) to yield chorismate, which is the branch point compound that serves as the starting substrate for the three terminal pathways of aromatic amino acid biosynthesis. This reaction introduces a second double bond into the aromatic ring system.</text>
</comment>
<comment type="catalytic activity">
    <reaction evidence="1">
        <text>5-O-(1-carboxyvinyl)-3-phosphoshikimate = chorismate + phosphate</text>
        <dbReference type="Rhea" id="RHEA:21020"/>
        <dbReference type="ChEBI" id="CHEBI:29748"/>
        <dbReference type="ChEBI" id="CHEBI:43474"/>
        <dbReference type="ChEBI" id="CHEBI:57701"/>
        <dbReference type="EC" id="4.2.3.5"/>
    </reaction>
</comment>
<comment type="cofactor">
    <cofactor evidence="1">
        <name>FMNH2</name>
        <dbReference type="ChEBI" id="CHEBI:57618"/>
    </cofactor>
    <text evidence="1">Reduced FMN (FMNH(2)).</text>
</comment>
<comment type="pathway">
    <text evidence="1">Metabolic intermediate biosynthesis; chorismate biosynthesis; chorismate from D-erythrose 4-phosphate and phosphoenolpyruvate: step 7/7.</text>
</comment>
<comment type="subunit">
    <text evidence="1">Homotetramer.</text>
</comment>
<comment type="similarity">
    <text evidence="1">Belongs to the chorismate synthase family.</text>
</comment>